<proteinExistence type="inferred from homology"/>
<organism>
    <name type="scientific">Shigella boydii serotype 4 (strain Sb227)</name>
    <dbReference type="NCBI Taxonomy" id="300268"/>
    <lineage>
        <taxon>Bacteria</taxon>
        <taxon>Pseudomonadati</taxon>
        <taxon>Pseudomonadota</taxon>
        <taxon>Gammaproteobacteria</taxon>
        <taxon>Enterobacterales</taxon>
        <taxon>Enterobacteriaceae</taxon>
        <taxon>Shigella</taxon>
    </lineage>
</organism>
<gene>
    <name evidence="1" type="primary">yciC</name>
    <name type="ordered locus">SBO_1810</name>
</gene>
<sequence length="247" mass="26505">MSITAQSVYRDTGNFFRNQFMTILLVSLLCAFITVVLGHVFSPSDAQLAQLNDGVPVSGSSGLFDLVQNMSPEQQQILLQASAASTFSELIGNAILAGGVILIIQLVSAGQRVSALRAIGASAPILPKLFILIFLTTLLVQIGIMLVVVPGIIMAILLALAPVMLVQDKMGIFASMRSSMRLTWANMRLVAPAVLSWLLAKTLLLLFASSFAALTPEIGAVLANTLSNLISAILLIYLFRLYMLIRQ</sequence>
<name>YCIC_SHIBS</name>
<keyword id="KW-0997">Cell inner membrane</keyword>
<keyword id="KW-1003">Cell membrane</keyword>
<keyword id="KW-0472">Membrane</keyword>
<keyword id="KW-0812">Transmembrane</keyword>
<keyword id="KW-1133">Transmembrane helix</keyword>
<accession>Q31ZU9</accession>
<evidence type="ECO:0000255" key="1">
    <source>
        <dbReference type="HAMAP-Rule" id="MF_01067"/>
    </source>
</evidence>
<dbReference type="EMBL" id="CP000036">
    <property type="protein sequence ID" value="ABB66409.1"/>
    <property type="molecule type" value="Genomic_DNA"/>
</dbReference>
<dbReference type="RefSeq" id="WP_000028536.1">
    <property type="nucleotide sequence ID" value="NC_007613.1"/>
</dbReference>
<dbReference type="KEGG" id="sbo:SBO_1810"/>
<dbReference type="HOGENOM" id="CLU_073287_0_0_6"/>
<dbReference type="Proteomes" id="UP000007067">
    <property type="component" value="Chromosome"/>
</dbReference>
<dbReference type="GO" id="GO:0005886">
    <property type="term" value="C:plasma membrane"/>
    <property type="evidence" value="ECO:0007669"/>
    <property type="project" value="UniProtKB-SubCell"/>
</dbReference>
<dbReference type="HAMAP" id="MF_01067">
    <property type="entry name" value="UPF0259"/>
    <property type="match status" value="1"/>
</dbReference>
<dbReference type="InterPro" id="IPR009627">
    <property type="entry name" value="UPF0259"/>
</dbReference>
<dbReference type="NCBIfam" id="NF002774">
    <property type="entry name" value="PRK02868.1"/>
    <property type="match status" value="1"/>
</dbReference>
<dbReference type="Pfam" id="PF06790">
    <property type="entry name" value="UPF0259"/>
    <property type="match status" value="1"/>
</dbReference>
<reference key="1">
    <citation type="journal article" date="2005" name="Nucleic Acids Res.">
        <title>Genome dynamics and diversity of Shigella species, the etiologic agents of bacillary dysentery.</title>
        <authorList>
            <person name="Yang F."/>
            <person name="Yang J."/>
            <person name="Zhang X."/>
            <person name="Chen L."/>
            <person name="Jiang Y."/>
            <person name="Yan Y."/>
            <person name="Tang X."/>
            <person name="Wang J."/>
            <person name="Xiong Z."/>
            <person name="Dong J."/>
            <person name="Xue Y."/>
            <person name="Zhu Y."/>
            <person name="Xu X."/>
            <person name="Sun L."/>
            <person name="Chen S."/>
            <person name="Nie H."/>
            <person name="Peng J."/>
            <person name="Xu J."/>
            <person name="Wang Y."/>
            <person name="Yuan Z."/>
            <person name="Wen Y."/>
            <person name="Yao Z."/>
            <person name="Shen Y."/>
            <person name="Qiang B."/>
            <person name="Hou Y."/>
            <person name="Yu J."/>
            <person name="Jin Q."/>
        </authorList>
    </citation>
    <scope>NUCLEOTIDE SEQUENCE [LARGE SCALE GENOMIC DNA]</scope>
    <source>
        <strain>Sb227</strain>
    </source>
</reference>
<protein>
    <recommendedName>
        <fullName evidence="1">UPF0259 membrane protein YciC</fullName>
    </recommendedName>
</protein>
<comment type="subcellular location">
    <subcellularLocation>
        <location evidence="1">Cell inner membrane</location>
        <topology evidence="1">Multi-pass membrane protein</topology>
    </subcellularLocation>
</comment>
<comment type="similarity">
    <text evidence="1">Belongs to the UPF0259 family.</text>
</comment>
<feature type="chain" id="PRO_1000064532" description="UPF0259 membrane protein YciC">
    <location>
        <begin position="1"/>
        <end position="247"/>
    </location>
</feature>
<feature type="transmembrane region" description="Helical" evidence="1">
    <location>
        <begin position="20"/>
        <end position="40"/>
    </location>
</feature>
<feature type="transmembrane region" description="Helical" evidence="1">
    <location>
        <begin position="90"/>
        <end position="110"/>
    </location>
</feature>
<feature type="transmembrane region" description="Helical" evidence="1">
    <location>
        <begin position="118"/>
        <end position="140"/>
    </location>
</feature>
<feature type="transmembrane region" description="Helical" evidence="1">
    <location>
        <begin position="152"/>
        <end position="172"/>
    </location>
</feature>
<feature type="transmembrane region" description="Helical" evidence="1">
    <location>
        <begin position="187"/>
        <end position="209"/>
    </location>
</feature>
<feature type="transmembrane region" description="Helical" evidence="1">
    <location>
        <begin position="225"/>
        <end position="245"/>
    </location>
</feature>